<accession>A1V885</accession>
<organism>
    <name type="scientific">Burkholderia mallei (strain SAVP1)</name>
    <dbReference type="NCBI Taxonomy" id="320388"/>
    <lineage>
        <taxon>Bacteria</taxon>
        <taxon>Pseudomonadati</taxon>
        <taxon>Pseudomonadota</taxon>
        <taxon>Betaproteobacteria</taxon>
        <taxon>Burkholderiales</taxon>
        <taxon>Burkholderiaceae</taxon>
        <taxon>Burkholderia</taxon>
        <taxon>pseudomallei group</taxon>
    </lineage>
</organism>
<reference key="1">
    <citation type="journal article" date="2010" name="Genome Biol. Evol.">
        <title>Continuing evolution of Burkholderia mallei through genome reduction and large-scale rearrangements.</title>
        <authorList>
            <person name="Losada L."/>
            <person name="Ronning C.M."/>
            <person name="DeShazer D."/>
            <person name="Woods D."/>
            <person name="Fedorova N."/>
            <person name="Kim H.S."/>
            <person name="Shabalina S.A."/>
            <person name="Pearson T.R."/>
            <person name="Brinkac L."/>
            <person name="Tan P."/>
            <person name="Nandi T."/>
            <person name="Crabtree J."/>
            <person name="Badger J."/>
            <person name="Beckstrom-Sternberg S."/>
            <person name="Saqib M."/>
            <person name="Schutzer S.E."/>
            <person name="Keim P."/>
            <person name="Nierman W.C."/>
        </authorList>
    </citation>
    <scope>NUCLEOTIDE SEQUENCE [LARGE SCALE GENOMIC DNA]</scope>
    <source>
        <strain>SAVP1</strain>
    </source>
</reference>
<protein>
    <recommendedName>
        <fullName evidence="1">Large ribosomal subunit protein uL30</fullName>
    </recommendedName>
    <alternativeName>
        <fullName evidence="2">50S ribosomal protein L30</fullName>
    </alternativeName>
</protein>
<keyword id="KW-0687">Ribonucleoprotein</keyword>
<keyword id="KW-0689">Ribosomal protein</keyword>
<proteinExistence type="inferred from homology"/>
<name>RL30_BURMS</name>
<comment type="subunit">
    <text evidence="1">Part of the 50S ribosomal subunit.</text>
</comment>
<comment type="similarity">
    <text evidence="1">Belongs to the universal ribosomal protein uL30 family.</text>
</comment>
<feature type="chain" id="PRO_1000056020" description="Large ribosomal subunit protein uL30">
    <location>
        <begin position="1"/>
        <end position="60"/>
    </location>
</feature>
<sequence length="60" mass="6621">MSEKTVKVQLVKSLIGTRESHRATVRGLGLRRLNSVSELQDTPAVRGMINKVSYLVKVIG</sequence>
<gene>
    <name evidence="1" type="primary">rpmD</name>
    <name type="ordered locus">BMASAVP1_A3151</name>
</gene>
<dbReference type="EMBL" id="CP000526">
    <property type="protein sequence ID" value="ABM52169.1"/>
    <property type="molecule type" value="Genomic_DNA"/>
</dbReference>
<dbReference type="RefSeq" id="WP_004202755.1">
    <property type="nucleotide sequence ID" value="NC_008785.1"/>
</dbReference>
<dbReference type="SMR" id="A1V885"/>
<dbReference type="GeneID" id="93061814"/>
<dbReference type="KEGG" id="bmv:BMASAVP1_A3151"/>
<dbReference type="HOGENOM" id="CLU_131047_1_4_4"/>
<dbReference type="GO" id="GO:0022625">
    <property type="term" value="C:cytosolic large ribosomal subunit"/>
    <property type="evidence" value="ECO:0007669"/>
    <property type="project" value="TreeGrafter"/>
</dbReference>
<dbReference type="GO" id="GO:0003735">
    <property type="term" value="F:structural constituent of ribosome"/>
    <property type="evidence" value="ECO:0007669"/>
    <property type="project" value="InterPro"/>
</dbReference>
<dbReference type="GO" id="GO:0006412">
    <property type="term" value="P:translation"/>
    <property type="evidence" value="ECO:0007669"/>
    <property type="project" value="UniProtKB-UniRule"/>
</dbReference>
<dbReference type="CDD" id="cd01658">
    <property type="entry name" value="Ribosomal_L30"/>
    <property type="match status" value="1"/>
</dbReference>
<dbReference type="FunFam" id="3.30.1390.20:FF:000001">
    <property type="entry name" value="50S ribosomal protein L30"/>
    <property type="match status" value="1"/>
</dbReference>
<dbReference type="Gene3D" id="3.30.1390.20">
    <property type="entry name" value="Ribosomal protein L30, ferredoxin-like fold domain"/>
    <property type="match status" value="1"/>
</dbReference>
<dbReference type="HAMAP" id="MF_01371_B">
    <property type="entry name" value="Ribosomal_uL30_B"/>
    <property type="match status" value="1"/>
</dbReference>
<dbReference type="InterPro" id="IPR036919">
    <property type="entry name" value="Ribo_uL30_ferredoxin-like_sf"/>
</dbReference>
<dbReference type="InterPro" id="IPR005996">
    <property type="entry name" value="Ribosomal_uL30_bac-type"/>
</dbReference>
<dbReference type="InterPro" id="IPR016082">
    <property type="entry name" value="Ribosomal_uL30_ferredoxin-like"/>
</dbReference>
<dbReference type="NCBIfam" id="TIGR01308">
    <property type="entry name" value="rpmD_bact"/>
    <property type="match status" value="1"/>
</dbReference>
<dbReference type="PANTHER" id="PTHR15892:SF2">
    <property type="entry name" value="LARGE RIBOSOMAL SUBUNIT PROTEIN UL30M"/>
    <property type="match status" value="1"/>
</dbReference>
<dbReference type="PANTHER" id="PTHR15892">
    <property type="entry name" value="MITOCHONDRIAL RIBOSOMAL PROTEIN L30"/>
    <property type="match status" value="1"/>
</dbReference>
<dbReference type="Pfam" id="PF00327">
    <property type="entry name" value="Ribosomal_L30"/>
    <property type="match status" value="1"/>
</dbReference>
<dbReference type="PIRSF" id="PIRSF002211">
    <property type="entry name" value="Ribosomal_L30_bac-type"/>
    <property type="match status" value="1"/>
</dbReference>
<dbReference type="SUPFAM" id="SSF55129">
    <property type="entry name" value="Ribosomal protein L30p/L7e"/>
    <property type="match status" value="1"/>
</dbReference>
<evidence type="ECO:0000255" key="1">
    <source>
        <dbReference type="HAMAP-Rule" id="MF_01371"/>
    </source>
</evidence>
<evidence type="ECO:0000305" key="2"/>